<organism>
    <name type="scientific">Marinobacter nauticus (strain ATCC 700491 / DSM 11845 / VT8)</name>
    <name type="common">Marinobacter aquaeolei</name>
    <dbReference type="NCBI Taxonomy" id="351348"/>
    <lineage>
        <taxon>Bacteria</taxon>
        <taxon>Pseudomonadati</taxon>
        <taxon>Pseudomonadota</taxon>
        <taxon>Gammaproteobacteria</taxon>
        <taxon>Pseudomonadales</taxon>
        <taxon>Marinobacteraceae</taxon>
        <taxon>Marinobacter</taxon>
    </lineage>
</organism>
<proteinExistence type="inferred from homology"/>
<gene>
    <name evidence="1" type="primary">rnt</name>
    <name type="ordered locus">Maqu_2506</name>
</gene>
<keyword id="KW-0269">Exonuclease</keyword>
<keyword id="KW-0378">Hydrolase</keyword>
<keyword id="KW-0460">Magnesium</keyword>
<keyword id="KW-0479">Metal-binding</keyword>
<keyword id="KW-0540">Nuclease</keyword>
<keyword id="KW-0819">tRNA processing</keyword>
<feature type="chain" id="PRO_1000011401" description="Ribonuclease T">
    <location>
        <begin position="1"/>
        <end position="221"/>
    </location>
</feature>
<feature type="domain" description="Exonuclease" evidence="1">
    <location>
        <begin position="21"/>
        <end position="195"/>
    </location>
</feature>
<feature type="active site" description="Proton donor/acceptor" evidence="1">
    <location>
        <position position="182"/>
    </location>
</feature>
<feature type="binding site" evidence="1">
    <location>
        <position position="24"/>
    </location>
    <ligand>
        <name>Mg(2+)</name>
        <dbReference type="ChEBI" id="CHEBI:18420"/>
        <label>1</label>
        <note>catalytic</note>
    </ligand>
</feature>
<feature type="binding site" evidence="1">
    <location>
        <position position="24"/>
    </location>
    <ligand>
        <name>Mg(2+)</name>
        <dbReference type="ChEBI" id="CHEBI:18420"/>
        <label>2</label>
        <note>catalytic</note>
    </ligand>
</feature>
<feature type="binding site" evidence="1">
    <location>
        <position position="26"/>
    </location>
    <ligand>
        <name>Mg(2+)</name>
        <dbReference type="ChEBI" id="CHEBI:18420"/>
        <label>2</label>
        <note>catalytic</note>
    </ligand>
</feature>
<feature type="binding site" evidence="1">
    <location>
        <position position="182"/>
    </location>
    <ligand>
        <name>Mg(2+)</name>
        <dbReference type="ChEBI" id="CHEBI:18420"/>
        <label>2</label>
        <note>catalytic</note>
    </ligand>
</feature>
<feature type="binding site" evidence="1">
    <location>
        <position position="187"/>
    </location>
    <ligand>
        <name>Mg(2+)</name>
        <dbReference type="ChEBI" id="CHEBI:18420"/>
        <label>2</label>
        <note>catalytic</note>
    </ligand>
</feature>
<feature type="site" description="Important for substrate binding and specificity" evidence="1">
    <location>
        <position position="30"/>
    </location>
</feature>
<feature type="site" description="Important for substrate binding and specificity" evidence="1">
    <location>
        <position position="78"/>
    </location>
</feature>
<feature type="site" description="Important for substrate binding and specificity" evidence="1">
    <location>
        <position position="125"/>
    </location>
</feature>
<feature type="site" description="Important for substrate binding and specificity" evidence="1">
    <location>
        <position position="147"/>
    </location>
</feature>
<dbReference type="EC" id="3.1.13.-" evidence="1"/>
<dbReference type="EMBL" id="CP000514">
    <property type="protein sequence ID" value="ABM19581.1"/>
    <property type="molecule type" value="Genomic_DNA"/>
</dbReference>
<dbReference type="SMR" id="A1U3L2"/>
<dbReference type="STRING" id="351348.Maqu_2506"/>
<dbReference type="KEGG" id="maq:Maqu_2506"/>
<dbReference type="eggNOG" id="COG0847">
    <property type="taxonomic scope" value="Bacteria"/>
</dbReference>
<dbReference type="HOGENOM" id="CLU_082724_0_0_6"/>
<dbReference type="OrthoDB" id="9778264at2"/>
<dbReference type="Proteomes" id="UP000000998">
    <property type="component" value="Chromosome"/>
</dbReference>
<dbReference type="GO" id="GO:0005829">
    <property type="term" value="C:cytosol"/>
    <property type="evidence" value="ECO:0007669"/>
    <property type="project" value="TreeGrafter"/>
</dbReference>
<dbReference type="GO" id="GO:0008408">
    <property type="term" value="F:3'-5' exonuclease activity"/>
    <property type="evidence" value="ECO:0007669"/>
    <property type="project" value="TreeGrafter"/>
</dbReference>
<dbReference type="GO" id="GO:0000287">
    <property type="term" value="F:magnesium ion binding"/>
    <property type="evidence" value="ECO:0007669"/>
    <property type="project" value="UniProtKB-UniRule"/>
</dbReference>
<dbReference type="GO" id="GO:0003676">
    <property type="term" value="F:nucleic acid binding"/>
    <property type="evidence" value="ECO:0007669"/>
    <property type="project" value="InterPro"/>
</dbReference>
<dbReference type="GO" id="GO:0016896">
    <property type="term" value="F:RNA exonuclease activity, producing 5'-phosphomonoesters"/>
    <property type="evidence" value="ECO:0007669"/>
    <property type="project" value="UniProtKB-UniRule"/>
</dbReference>
<dbReference type="GO" id="GO:0045004">
    <property type="term" value="P:DNA replication proofreading"/>
    <property type="evidence" value="ECO:0007669"/>
    <property type="project" value="TreeGrafter"/>
</dbReference>
<dbReference type="GO" id="GO:0008033">
    <property type="term" value="P:tRNA processing"/>
    <property type="evidence" value="ECO:0007669"/>
    <property type="project" value="UniProtKB-KW"/>
</dbReference>
<dbReference type="CDD" id="cd06134">
    <property type="entry name" value="RNaseT"/>
    <property type="match status" value="1"/>
</dbReference>
<dbReference type="FunFam" id="3.30.420.10:FF:000009">
    <property type="entry name" value="Ribonuclease T"/>
    <property type="match status" value="1"/>
</dbReference>
<dbReference type="Gene3D" id="3.30.420.10">
    <property type="entry name" value="Ribonuclease H-like superfamily/Ribonuclease H"/>
    <property type="match status" value="1"/>
</dbReference>
<dbReference type="HAMAP" id="MF_00157">
    <property type="entry name" value="RNase_T"/>
    <property type="match status" value="1"/>
</dbReference>
<dbReference type="InterPro" id="IPR013520">
    <property type="entry name" value="Exonuclease_RNaseT/DNA_pol3"/>
</dbReference>
<dbReference type="InterPro" id="IPR005987">
    <property type="entry name" value="RNase_T"/>
</dbReference>
<dbReference type="InterPro" id="IPR012337">
    <property type="entry name" value="RNaseH-like_sf"/>
</dbReference>
<dbReference type="InterPro" id="IPR036397">
    <property type="entry name" value="RNaseH_sf"/>
</dbReference>
<dbReference type="NCBIfam" id="TIGR01298">
    <property type="entry name" value="RNaseT"/>
    <property type="match status" value="1"/>
</dbReference>
<dbReference type="PANTHER" id="PTHR30231">
    <property type="entry name" value="DNA POLYMERASE III SUBUNIT EPSILON"/>
    <property type="match status" value="1"/>
</dbReference>
<dbReference type="PANTHER" id="PTHR30231:SF2">
    <property type="entry name" value="RIBONUCLEASE T"/>
    <property type="match status" value="1"/>
</dbReference>
<dbReference type="Pfam" id="PF00929">
    <property type="entry name" value="RNase_T"/>
    <property type="match status" value="1"/>
</dbReference>
<dbReference type="SMART" id="SM00479">
    <property type="entry name" value="EXOIII"/>
    <property type="match status" value="1"/>
</dbReference>
<dbReference type="SUPFAM" id="SSF53098">
    <property type="entry name" value="Ribonuclease H-like"/>
    <property type="match status" value="1"/>
</dbReference>
<accession>A1U3L2</accession>
<sequence length="221" mass="24581">MSDENKQPHPMSQRFRGFLPVVVDVETAGFNPERDALLEIAAVMLTMDEDGWLRRGETHVQQIDPFEGANLEQSALDFTGIDPWNPEREAVPEREGLSEIFSPIRKAVKEHDCKRAVLVGHNATFDHNFVFAAALRADIKRNPFHPFSTFDTATLAGLAYGHTVLAQACKLAGIPFSNKEAHSAAYDAEKTADLFCGIVNRWRELGGFPPPPIEIAEEPQE</sequence>
<evidence type="ECO:0000255" key="1">
    <source>
        <dbReference type="HAMAP-Rule" id="MF_00157"/>
    </source>
</evidence>
<name>RNT_MARN8</name>
<reference key="1">
    <citation type="journal article" date="2011" name="Appl. Environ. Microbiol.">
        <title>Genomic potential of Marinobacter aquaeolei, a biogeochemical 'opportunitroph'.</title>
        <authorList>
            <person name="Singer E."/>
            <person name="Webb E.A."/>
            <person name="Nelson W.C."/>
            <person name="Heidelberg J.F."/>
            <person name="Ivanova N."/>
            <person name="Pati A."/>
            <person name="Edwards K.J."/>
        </authorList>
    </citation>
    <scope>NUCLEOTIDE SEQUENCE [LARGE SCALE GENOMIC DNA]</scope>
    <source>
        <strain>ATCC 700491 / DSM 11845 / VT8</strain>
    </source>
</reference>
<comment type="function">
    <text evidence="1">Trims short 3' overhangs of a variety of RNA species, leaving a one or two nucleotide 3' overhang. Responsible for the end-turnover of tRNA: specifically removes the terminal AMP residue from uncharged tRNA (tRNA-C-C-A). Also appears to be involved in tRNA biosynthesis.</text>
</comment>
<comment type="cofactor">
    <cofactor evidence="1">
        <name>Mg(2+)</name>
        <dbReference type="ChEBI" id="CHEBI:18420"/>
    </cofactor>
    <text evidence="1">Binds two Mg(2+) per subunit. The active form of the enzyme binds two Mg(2+) ions in its active site. The first Mg(2+) forms only one salt bridge with the protein.</text>
</comment>
<comment type="subunit">
    <text evidence="1">Homodimer.</text>
</comment>
<comment type="similarity">
    <text evidence="1">Belongs to the RNase T family.</text>
</comment>
<protein>
    <recommendedName>
        <fullName evidence="1">Ribonuclease T</fullName>
        <ecNumber evidence="1">3.1.13.-</ecNumber>
    </recommendedName>
    <alternativeName>
        <fullName evidence="1">Exoribonuclease T</fullName>
        <shortName evidence="1">RNase T</shortName>
    </alternativeName>
</protein>